<keyword id="KW-0002">3D-structure</keyword>
<keyword id="KW-0131">Cell cycle</keyword>
<keyword id="KW-0132">Cell division</keyword>
<keyword id="KW-0175">Coiled coil</keyword>
<keyword id="KW-0963">Cytoplasm</keyword>
<keyword id="KW-0206">Cytoskeleton</keyword>
<keyword id="KW-0469">Meiosis</keyword>
<keyword id="KW-0597">Phosphoprotein</keyword>
<keyword id="KW-1185">Reference proteome</keyword>
<keyword id="KW-0749">Sporulation</keyword>
<evidence type="ECO:0000255" key="1"/>
<evidence type="ECO:0000256" key="2">
    <source>
        <dbReference type="SAM" id="MobiDB-lite"/>
    </source>
</evidence>
<evidence type="ECO:0000269" key="3">
    <source>
    </source>
</evidence>
<evidence type="ECO:0000269" key="4">
    <source>
    </source>
</evidence>
<evidence type="ECO:0000269" key="5">
    <source>
    </source>
</evidence>
<evidence type="ECO:0000269" key="6">
    <source>
    </source>
</evidence>
<evidence type="ECO:0000269" key="7">
    <source>
    </source>
</evidence>
<evidence type="ECO:0000269" key="8">
    <source>
    </source>
</evidence>
<evidence type="ECO:0000269" key="9">
    <source>
    </source>
</evidence>
<evidence type="ECO:0007744" key="10">
    <source>
    </source>
</evidence>
<evidence type="ECO:0007744" key="11">
    <source>
    </source>
</evidence>
<evidence type="ECO:0007744" key="12">
    <source>
    </source>
</evidence>
<evidence type="ECO:0007829" key="13">
    <source>
        <dbReference type="PDB" id="3OA7"/>
    </source>
</evidence>
<organism>
    <name type="scientific">Saccharomyces cerevisiae (strain ATCC 204508 / S288c)</name>
    <name type="common">Baker's yeast</name>
    <dbReference type="NCBI Taxonomy" id="559292"/>
    <lineage>
        <taxon>Eukaryota</taxon>
        <taxon>Fungi</taxon>
        <taxon>Dikarya</taxon>
        <taxon>Ascomycota</taxon>
        <taxon>Saccharomycotina</taxon>
        <taxon>Saccharomycetes</taxon>
        <taxon>Saccharomycetales</taxon>
        <taxon>Saccharomycetaceae</taxon>
        <taxon>Saccharomyces</taxon>
    </lineage>
</organism>
<gene>
    <name type="primary">CNM67</name>
    <name type="ordered locus">YNL225C</name>
    <name type="ORF">N1264</name>
</gene>
<dbReference type="EMBL" id="Z69381">
    <property type="protein sequence ID" value="CAA93373.1"/>
    <property type="molecule type" value="Genomic_DNA"/>
</dbReference>
<dbReference type="EMBL" id="Z71501">
    <property type="protein sequence ID" value="CAA96128.1"/>
    <property type="molecule type" value="Genomic_DNA"/>
</dbReference>
<dbReference type="EMBL" id="BK006947">
    <property type="protein sequence ID" value="DAA10331.1"/>
    <property type="molecule type" value="Genomic_DNA"/>
</dbReference>
<dbReference type="PIR" id="S63183">
    <property type="entry name" value="S63183"/>
</dbReference>
<dbReference type="RefSeq" id="NP_014174.1">
    <property type="nucleotide sequence ID" value="NM_001183063.1"/>
</dbReference>
<dbReference type="PDB" id="3OA7">
    <property type="method" value="X-ray"/>
    <property type="resolution" value="2.30 A"/>
    <property type="chains" value="A=429-581"/>
</dbReference>
<dbReference type="PDBsum" id="3OA7"/>
<dbReference type="SMR" id="P53865"/>
<dbReference type="BioGRID" id="35611">
    <property type="interactions" value="91"/>
</dbReference>
<dbReference type="ComplexPortal" id="CPX-1420">
    <property type="entry name" value="Spindle pole body intermediate layer 2 complex"/>
</dbReference>
<dbReference type="DIP" id="DIP-2447N"/>
<dbReference type="FunCoup" id="P53865">
    <property type="interactions" value="225"/>
</dbReference>
<dbReference type="IntAct" id="P53865">
    <property type="interactions" value="41"/>
</dbReference>
<dbReference type="MINT" id="P53865"/>
<dbReference type="STRING" id="4932.YNL225C"/>
<dbReference type="iPTMnet" id="P53865"/>
<dbReference type="PaxDb" id="4932-YNL225C"/>
<dbReference type="PeptideAtlas" id="P53865"/>
<dbReference type="EnsemblFungi" id="YNL225C_mRNA">
    <property type="protein sequence ID" value="YNL225C"/>
    <property type="gene ID" value="YNL225C"/>
</dbReference>
<dbReference type="GeneID" id="855496"/>
<dbReference type="KEGG" id="sce:YNL225C"/>
<dbReference type="AGR" id="SGD:S000005169"/>
<dbReference type="SGD" id="S000005169">
    <property type="gene designation" value="CNM67"/>
</dbReference>
<dbReference type="VEuPathDB" id="FungiDB:YNL225C"/>
<dbReference type="eggNOG" id="ENOG502RYJ3">
    <property type="taxonomic scope" value="Eukaryota"/>
</dbReference>
<dbReference type="GeneTree" id="ENSGT00940000176826"/>
<dbReference type="HOGENOM" id="CLU_469465_0_0_1"/>
<dbReference type="InParanoid" id="P53865"/>
<dbReference type="OMA" id="DHILEKM"/>
<dbReference type="OrthoDB" id="5376259at2759"/>
<dbReference type="BioCyc" id="YEAST:G3O-33228-MONOMER"/>
<dbReference type="BioGRID-ORCS" id="855496">
    <property type="hits" value="7 hits in 10 CRISPR screens"/>
</dbReference>
<dbReference type="CD-CODE" id="876000F7">
    <property type="entry name" value="Centrosome"/>
</dbReference>
<dbReference type="EvolutionaryTrace" id="P53865"/>
<dbReference type="PRO" id="PR:P53865"/>
<dbReference type="Proteomes" id="UP000002311">
    <property type="component" value="Chromosome XIV"/>
</dbReference>
<dbReference type="RNAct" id="P53865">
    <property type="molecule type" value="protein"/>
</dbReference>
<dbReference type="GO" id="GO:0005823">
    <property type="term" value="C:central plaque of spindle pole body"/>
    <property type="evidence" value="ECO:0000303"/>
    <property type="project" value="ComplexPortal"/>
</dbReference>
<dbReference type="GO" id="GO:0005737">
    <property type="term" value="C:cytoplasm"/>
    <property type="evidence" value="ECO:0007669"/>
    <property type="project" value="UniProtKB-KW"/>
</dbReference>
<dbReference type="GO" id="GO:0061499">
    <property type="term" value="C:outer plaque of mitotic spindle pole body"/>
    <property type="evidence" value="ECO:0000314"/>
    <property type="project" value="SGD"/>
</dbReference>
<dbReference type="GO" id="GO:0005824">
    <property type="term" value="C:outer plaque of spindle pole body"/>
    <property type="evidence" value="ECO:0000314"/>
    <property type="project" value="SGD"/>
</dbReference>
<dbReference type="GO" id="GO:0005816">
    <property type="term" value="C:spindle pole body"/>
    <property type="evidence" value="ECO:0007005"/>
    <property type="project" value="SGD"/>
</dbReference>
<dbReference type="GO" id="GO:0005200">
    <property type="term" value="F:structural constituent of cytoskeleton"/>
    <property type="evidence" value="ECO:0000315"/>
    <property type="project" value="SGD"/>
</dbReference>
<dbReference type="GO" id="GO:0051301">
    <property type="term" value="P:cell division"/>
    <property type="evidence" value="ECO:0007669"/>
    <property type="project" value="UniProtKB-KW"/>
</dbReference>
<dbReference type="GO" id="GO:0051321">
    <property type="term" value="P:meiotic cell cycle"/>
    <property type="evidence" value="ECO:0007669"/>
    <property type="project" value="UniProtKB-KW"/>
</dbReference>
<dbReference type="GO" id="GO:0007052">
    <property type="term" value="P:mitotic spindle organization"/>
    <property type="evidence" value="ECO:0000315"/>
    <property type="project" value="SGD"/>
</dbReference>
<dbReference type="GO" id="GO:0010968">
    <property type="term" value="P:regulation of microtubule nucleation"/>
    <property type="evidence" value="ECO:0000303"/>
    <property type="project" value="ComplexPortal"/>
</dbReference>
<dbReference type="GO" id="GO:0051300">
    <property type="term" value="P:spindle pole body organization"/>
    <property type="evidence" value="ECO:0000315"/>
    <property type="project" value="SGD"/>
</dbReference>
<dbReference type="GO" id="GO:0030435">
    <property type="term" value="P:sporulation resulting in formation of a cellular spore"/>
    <property type="evidence" value="ECO:0007669"/>
    <property type="project" value="UniProtKB-KW"/>
</dbReference>
<dbReference type="DisProt" id="DP02324"/>
<dbReference type="InterPro" id="IPR021750">
    <property type="entry name" value="Sid4-like"/>
</dbReference>
<dbReference type="Pfam" id="PF11778">
    <property type="entry name" value="SID"/>
    <property type="match status" value="1"/>
</dbReference>
<reference key="1">
    <citation type="journal article" date="1996" name="Yeast">
        <title>The DNA sequence of cosmid 14-5 from chromosome XIV reveals 21 open reading frames including a novel gene encoding a globin-like domain.</title>
        <authorList>
            <person name="Pandolfo D."/>
            <person name="de Antoni A."/>
            <person name="Lanfranchi G."/>
            <person name="Valle G."/>
        </authorList>
    </citation>
    <scope>NUCLEOTIDE SEQUENCE [GENOMIC DNA]</scope>
</reference>
<reference key="2">
    <citation type="journal article" date="1997" name="Nature">
        <title>The nucleotide sequence of Saccharomyces cerevisiae chromosome XIV and its evolutionary implications.</title>
        <authorList>
            <person name="Philippsen P."/>
            <person name="Kleine K."/>
            <person name="Poehlmann R."/>
            <person name="Duesterhoeft A."/>
            <person name="Hamberg K."/>
            <person name="Hegemann J.H."/>
            <person name="Obermaier B."/>
            <person name="Urrestarazu L.A."/>
            <person name="Aert R."/>
            <person name="Albermann K."/>
            <person name="Altmann R."/>
            <person name="Andre B."/>
            <person name="Baladron V."/>
            <person name="Ballesta J.P.G."/>
            <person name="Becam A.-M."/>
            <person name="Beinhauer J.D."/>
            <person name="Boskovic J."/>
            <person name="Buitrago M.J."/>
            <person name="Bussereau F."/>
            <person name="Coster F."/>
            <person name="Crouzet M."/>
            <person name="D'Angelo M."/>
            <person name="Dal Pero F."/>
            <person name="De Antoni A."/>
            <person name="del Rey F."/>
            <person name="Doignon F."/>
            <person name="Domdey H."/>
            <person name="Dubois E."/>
            <person name="Fiedler T.A."/>
            <person name="Fleig U."/>
            <person name="Floeth M."/>
            <person name="Fritz C."/>
            <person name="Gaillardin C."/>
            <person name="Garcia-Cantalejo J.M."/>
            <person name="Glansdorff N."/>
            <person name="Goffeau A."/>
            <person name="Gueldener U."/>
            <person name="Herbert C.J."/>
            <person name="Heumann K."/>
            <person name="Heuss-Neitzel D."/>
            <person name="Hilbert H."/>
            <person name="Hinni K."/>
            <person name="Iraqui Houssaini I."/>
            <person name="Jacquet M."/>
            <person name="Jimenez A."/>
            <person name="Jonniaux J.-L."/>
            <person name="Karpfinger-Hartl L."/>
            <person name="Lanfranchi G."/>
            <person name="Lepingle A."/>
            <person name="Levesque H."/>
            <person name="Lyck R."/>
            <person name="Maftahi M."/>
            <person name="Mallet L."/>
            <person name="Maurer C.T.C."/>
            <person name="Messenguy F."/>
            <person name="Mewes H.-W."/>
            <person name="Moestl D."/>
            <person name="Nasr F."/>
            <person name="Nicaud J.-M."/>
            <person name="Niedenthal R.K."/>
            <person name="Pandolfo D."/>
            <person name="Pierard A."/>
            <person name="Piravandi E."/>
            <person name="Planta R.J."/>
            <person name="Pohl T.M."/>
            <person name="Purnelle B."/>
            <person name="Rebischung C."/>
            <person name="Remacha M.A."/>
            <person name="Revuelta J.L."/>
            <person name="Rinke M."/>
            <person name="Saiz J.E."/>
            <person name="Sartorello F."/>
            <person name="Scherens B."/>
            <person name="Sen-Gupta M."/>
            <person name="Soler-Mira A."/>
            <person name="Urbanus J.H.M."/>
            <person name="Valle G."/>
            <person name="Van Dyck L."/>
            <person name="Verhasselt P."/>
            <person name="Vierendeels F."/>
            <person name="Vissers S."/>
            <person name="Voet M."/>
            <person name="Volckaert G."/>
            <person name="Wach A."/>
            <person name="Wambutt R."/>
            <person name="Wedler H."/>
            <person name="Zollner A."/>
            <person name="Hani J."/>
        </authorList>
    </citation>
    <scope>NUCLEOTIDE SEQUENCE [LARGE SCALE GENOMIC DNA]</scope>
    <source>
        <strain>ATCC 204508 / S288c</strain>
    </source>
</reference>
<reference key="3">
    <citation type="journal article" date="2014" name="G3 (Bethesda)">
        <title>The reference genome sequence of Saccharomyces cerevisiae: Then and now.</title>
        <authorList>
            <person name="Engel S.R."/>
            <person name="Dietrich F.S."/>
            <person name="Fisk D.G."/>
            <person name="Binkley G."/>
            <person name="Balakrishnan R."/>
            <person name="Costanzo M.C."/>
            <person name="Dwight S.S."/>
            <person name="Hitz B.C."/>
            <person name="Karra K."/>
            <person name="Nash R.S."/>
            <person name="Weng S."/>
            <person name="Wong E.D."/>
            <person name="Lloyd P."/>
            <person name="Skrzypek M.S."/>
            <person name="Miyasato S.R."/>
            <person name="Simison M."/>
            <person name="Cherry J.M."/>
        </authorList>
    </citation>
    <scope>GENOME REANNOTATION</scope>
    <source>
        <strain>ATCC 204508 / S288c</strain>
    </source>
</reference>
<reference key="4">
    <citation type="journal article" date="1998" name="Mol. Biol. Cell">
        <title>Saccharomyces cerevisiae cells with defective spindle pole body outer plaques accomplish nuclear migration via half-bridge-organized microtubules.</title>
        <authorList>
            <person name="Brachat A."/>
            <person name="Kilmartin J.V."/>
            <person name="Wach A."/>
            <person name="Philippsen P."/>
        </authorList>
    </citation>
    <scope>FUNCTION</scope>
    <scope>SUBCELLULAR LOCATION</scope>
    <scope>INTERACTION WITH NUD1</scope>
</reference>
<reference key="5">
    <citation type="journal article" date="2000" name="EMBO J.">
        <title>Role of the spindle pole body of yeast in mediating assembly of the prospore membrane during meiosis.</title>
        <authorList>
            <person name="Knop M."/>
            <person name="Strasser K."/>
        </authorList>
    </citation>
    <scope>DEVELOPMENTAL STAGE</scope>
</reference>
<reference key="6">
    <citation type="journal article" date="2001" name="Mol. Biol. Cell">
        <title>Cnm67p is a spacer protein of the Saccharomyces cerevisiae spindle pole body outer plaque.</title>
        <authorList>
            <person name="Schaerer F."/>
            <person name="Morgan G."/>
            <person name="Winey M."/>
            <person name="Philippsen P."/>
        </authorList>
    </citation>
    <scope>FUNCTION</scope>
    <scope>DOMAIN</scope>
    <scope>PHOSPHORYLATION</scope>
</reference>
<reference key="7">
    <citation type="journal article" date="2001" name="EMBO J.">
        <title>Prospore membrane formation linked to the leading edge protein (LEP) coat assembly.</title>
        <authorList>
            <person name="Moreno-Borchart A.C."/>
            <person name="Strasser K."/>
            <person name="Finkbeiner M.G."/>
            <person name="Shevchenko A."/>
            <person name="Shevchenko A."/>
            <person name="Knop M."/>
        </authorList>
    </citation>
    <scope>COMPOSITION OF A SPB COMPLEX</scope>
    <scope>INTERACTION WITH ADY3</scope>
</reference>
<reference key="8">
    <citation type="journal article" date="2002" name="Genetics">
        <title>Ady3p links spindle pole body function to spore wall synthesis in Saccharomyces cerevisiae.</title>
        <authorList>
            <person name="Nickas M.E."/>
            <person name="Neiman A.M."/>
        </authorList>
    </citation>
    <scope>INTERACTION WITH ADY3</scope>
</reference>
<reference key="9">
    <citation type="journal article" date="2003" name="Eukaryot. Cell">
        <title>Ady4p and Spo74p are components of the meiotic spindle pole body that promote growth of the prospore membrane in Saccharomyces cerevisiae.</title>
        <authorList>
            <person name="Nickas M.E."/>
            <person name="Schwartz C."/>
            <person name="Neiman A.M."/>
        </authorList>
    </citation>
    <scope>INTERACTION WITH ADY4</scope>
</reference>
<reference key="10">
    <citation type="journal article" date="2003" name="Acta Biochim. Pol.">
        <title>YOR129c, a new element interacting with Cnm67p, a component of the spindle pole body of Saccharomyces cerevisiae.</title>
        <authorList>
            <person name="Wysocka M."/>
            <person name="Bialkowska A."/>
            <person name="Micialkiewicz A."/>
            <person name="Kurlandzka A."/>
        </authorList>
    </citation>
    <scope>INTERACTION WITH YOR129C</scope>
</reference>
<reference key="11">
    <citation type="journal article" date="2007" name="J. Proteome Res.">
        <title>Large-scale phosphorylation analysis of alpha-factor-arrested Saccharomyces cerevisiae.</title>
        <authorList>
            <person name="Li X."/>
            <person name="Gerber S.A."/>
            <person name="Rudner A.D."/>
            <person name="Beausoleil S.A."/>
            <person name="Haas W."/>
            <person name="Villen J."/>
            <person name="Elias J.E."/>
            <person name="Gygi S.P."/>
        </authorList>
    </citation>
    <scope>PHOSPHORYLATION [LARGE SCALE ANALYSIS] AT SER-17</scope>
    <scope>IDENTIFICATION BY MASS SPECTROMETRY [LARGE SCALE ANALYSIS]</scope>
    <source>
        <strain>ADR376</strain>
    </source>
</reference>
<reference key="12">
    <citation type="journal article" date="2008" name="Mol. Cell. Proteomics">
        <title>A multidimensional chromatography technology for in-depth phosphoproteome analysis.</title>
        <authorList>
            <person name="Albuquerque C.P."/>
            <person name="Smolka M.B."/>
            <person name="Payne S.H."/>
            <person name="Bafna V."/>
            <person name="Eng J."/>
            <person name="Zhou H."/>
        </authorList>
    </citation>
    <scope>PHOSPHORYLATION [LARGE SCALE ANALYSIS] AT SER-17; SER-20 AND SER-72</scope>
    <scope>IDENTIFICATION BY MASS SPECTROMETRY [LARGE SCALE ANALYSIS]</scope>
</reference>
<reference key="13">
    <citation type="journal article" date="2009" name="Science">
        <title>Global analysis of Cdk1 substrate phosphorylation sites provides insights into evolution.</title>
        <authorList>
            <person name="Holt L.J."/>
            <person name="Tuch B.B."/>
            <person name="Villen J."/>
            <person name="Johnson A.D."/>
            <person name="Gygi S.P."/>
            <person name="Morgan D.O."/>
        </authorList>
    </citation>
    <scope>PHOSPHORYLATION [LARGE SCALE ANALYSIS] AT SER-17; SER-85; SER-89 AND SER-151</scope>
    <scope>IDENTIFICATION BY MASS SPECTROMETRY [LARGE SCALE ANALYSIS]</scope>
</reference>
<proteinExistence type="evidence at protein level"/>
<protein>
    <recommendedName>
        <fullName>Chaotic nuclear migration protein 67</fullName>
    </recommendedName>
</protein>
<sequence length="581" mass="67400">MTDFDLMNFPFHERLDSPVSENGEIKDGEPIPQNWLNENHVGKSILPLFVNPEDVINCNFSNARDSYEENKSPSMDQMNYARNTSYQESPGLQERPKNEKDKSPIGTDVHKKDVPNFIHSTPRENSSKHFTRANEQASAQPTDEHTSPDISIEDCNGAKIFLQNSLSKEDFRMLENVILGYQKKVIELGRDNLRQEERANSLQKELEAATKSNDKTLDNKKKIEEQTVLIENLTKDLSLNKEMLEKANDTIQTKHTALLSLTDSLRKAELFEIPIGILFFDLYDSEENSSKLDHILQEKYPNIKGFLCASQQEELSRISQRFKNAKAEAEDLRNELENKKIEIQTMREKNNTLIGTNKTLSKQNKILCDKFDKLTIDEKEILKGCNEEIKIKLERLNERLGSWEKSKEKYETSLKDKEKMLADAEKKTNTLSKELDNLRSRFGNLEGNTSERITIKNILQSRPDISAEECNFLMVEQIDSANLTTLQNTVKEIVLAVGIPYPKLRRKIPLLAIKLKYENIMLSNFAQRLHRQVYSQEMNLKKFTDQAYYDFMSTRRMDSIDHHLERCLDHLYDHILEKMVK</sequence>
<comment type="function">
    <text evidence="4 9">Involved in the pathway that organizes the shaping and sizing of the prospore membrane (PSM) during sporulation. Required for the proper formation of the spindle pole body (SPB) outer plaque. May connect the outer plaque to the central plaque embedded in the nuclear envelope.</text>
</comment>
<comment type="subunit">
    <text evidence="5 6 7 8 9">Interacts directly with ADY3 and YOR129C. Interacts with ADY4. Probable component of a SPB complex composed of ADY3, SSP1, DON1, MPC54, SPO21/MPC70, NUD1 and CNM67.</text>
</comment>
<comment type="interaction">
    <interactant intactId="EBI-29172">
        <id>P53865</id>
    </interactant>
    <interactant intactId="EBI-17777">
        <id>P36094</id>
        <label>SPC42</label>
    </interactant>
    <organismsDiffer>false</organismsDiffer>
    <experiments>4</experiments>
</comment>
<comment type="subcellular location">
    <subcellularLocation>
        <location evidence="9">Cytoplasm</location>
        <location evidence="9">Cytoskeleton</location>
        <location evidence="9">Microtubule organizing center</location>
        <location evidence="9">Spindle pole body</location>
    </subcellularLocation>
    <text>Localizes to the meiotic outer plaque of the SPB, at the end of the meiotic spindles.</text>
</comment>
<comment type="developmental stage">
    <text evidence="3">Meiosis-specific. Expressed from 3 to 9 hours after induction of sporulation.</text>
</comment>
<comment type="domain">
    <text evidence="4">The length of the coiled coil are required to adjust the space between outer plaque and the central plaque.</text>
</comment>
<comment type="PTM">
    <text evidence="4">Phosphorylated in its N-terminal part.</text>
</comment>
<name>CNM67_YEAST</name>
<accession>P53865</accession>
<accession>D6W0W5</accession>
<feature type="chain" id="PRO_0000089973" description="Chaotic nuclear migration protein 67">
    <location>
        <begin position="1"/>
        <end position="581"/>
    </location>
</feature>
<feature type="region of interest" description="Disordered" evidence="2">
    <location>
        <begin position="86"/>
        <end position="150"/>
    </location>
</feature>
<feature type="coiled-coil region" evidence="1">
    <location>
        <begin position="179"/>
        <end position="252"/>
    </location>
</feature>
<feature type="coiled-coil region" evidence="1">
    <location>
        <begin position="306"/>
        <end position="363"/>
    </location>
</feature>
<feature type="coiled-coil region" evidence="1">
    <location>
        <begin position="373"/>
        <end position="451"/>
    </location>
</feature>
<feature type="compositionally biased region" description="Basic and acidic residues" evidence="2">
    <location>
        <begin position="94"/>
        <end position="114"/>
    </location>
</feature>
<feature type="modified residue" description="Phosphoserine" evidence="10 11 12">
    <location>
        <position position="17"/>
    </location>
</feature>
<feature type="modified residue" description="Phosphoserine" evidence="11">
    <location>
        <position position="20"/>
    </location>
</feature>
<feature type="modified residue" description="Phosphoserine" evidence="11">
    <location>
        <position position="72"/>
    </location>
</feature>
<feature type="modified residue" description="Phosphoserine" evidence="12">
    <location>
        <position position="85"/>
    </location>
</feature>
<feature type="modified residue" description="Phosphoserine" evidence="12">
    <location>
        <position position="89"/>
    </location>
</feature>
<feature type="modified residue" description="Phosphoserine" evidence="12">
    <location>
        <position position="151"/>
    </location>
</feature>
<feature type="helix" evidence="13">
    <location>
        <begin position="429"/>
        <end position="446"/>
    </location>
</feature>
<feature type="helix" evidence="13">
    <location>
        <begin position="449"/>
        <end position="451"/>
    </location>
</feature>
<feature type="helix" evidence="13">
    <location>
        <begin position="455"/>
        <end position="461"/>
    </location>
</feature>
<feature type="helix" evidence="13">
    <location>
        <begin position="467"/>
        <end position="473"/>
    </location>
</feature>
<feature type="helix" evidence="13">
    <location>
        <begin position="475"/>
        <end position="480"/>
    </location>
</feature>
<feature type="helix" evidence="13">
    <location>
        <begin position="483"/>
        <end position="497"/>
    </location>
</feature>
<feature type="helix" evidence="13">
    <location>
        <begin position="501"/>
        <end position="503"/>
    </location>
</feature>
<feature type="helix" evidence="13">
    <location>
        <begin position="504"/>
        <end position="516"/>
    </location>
</feature>
<feature type="helix" evidence="13">
    <location>
        <begin position="518"/>
        <end position="533"/>
    </location>
</feature>
<feature type="helix" evidence="13">
    <location>
        <begin position="540"/>
        <end position="554"/>
    </location>
</feature>
<feature type="helix" evidence="13">
    <location>
        <begin position="563"/>
        <end position="571"/>
    </location>
</feature>